<organism>
    <name type="scientific">Oryctolagus cuniculus</name>
    <name type="common">Rabbit</name>
    <dbReference type="NCBI Taxonomy" id="9986"/>
    <lineage>
        <taxon>Eukaryota</taxon>
        <taxon>Metazoa</taxon>
        <taxon>Chordata</taxon>
        <taxon>Craniata</taxon>
        <taxon>Vertebrata</taxon>
        <taxon>Euteleostomi</taxon>
        <taxon>Mammalia</taxon>
        <taxon>Eutheria</taxon>
        <taxon>Euarchontoglires</taxon>
        <taxon>Glires</taxon>
        <taxon>Lagomorpha</taxon>
        <taxon>Leporidae</taxon>
        <taxon>Oryctolagus</taxon>
    </lineage>
</organism>
<sequence>MDPVVVLGLCLSCLLLLSLWKQSYGGGKLPPGPTPFPILGNILQIGIQDISKSFTKLSEVYGPVFTVYLGMKPTVVIHGYDAVKEALVDLGEEFSGRIVFPLTAKINKGYGIVFSNGKRWKETRRFSLMTLRDFGMGKRSIEDRVQEEARCLVEELRKTNGSPCNPTFILGAAPCNVICSVIFQNRFDYTDQDFLSLMGKLNENFKILNSPWVQMCNNFPILIDYLPGSHNKILRNNIYIRNYVLEKIKEHQETLDINNPRDFIDCFLIKMEQEKDNQQSEFTIENLMTTLSDVFGAGTETTSTTLRYGLLLLMKHPEVIAKVQEEIERVIGRHRSPCMQDRSRMPYTDATVHEIQRYINLIPNNVPRATTCNVKFRSYLIPKGTAVITSLTSMLYNDKEFPNPDRFDPGHFLDASGKFRKSDYFMPFSTGKRVCVGEVLARMELFLFLTAILQNFTPKPLVDPKDIDTTPLVSGLGRVPPLYQLSFIPA</sequence>
<protein>
    <recommendedName>
        <fullName>Cytochrome P450 2C1</fullName>
        <ecNumber>1.14.14.1</ecNumber>
    </recommendedName>
    <alternativeName>
        <fullName>CYPIIC1</fullName>
    </alternativeName>
    <alternativeName>
        <fullName>Cytochrome P-450 IIC1</fullName>
    </alternativeName>
    <alternativeName>
        <fullName>Cytochrome P450 PBc1</fullName>
    </alternativeName>
</protein>
<proteinExistence type="evidence at protein level"/>
<dbReference type="EC" id="1.14.14.1"/>
<dbReference type="EMBL" id="M74199">
    <property type="protein sequence ID" value="AAA31436.1"/>
    <property type="molecule type" value="Genomic_DNA"/>
</dbReference>
<dbReference type="EMBL" id="K01522">
    <property type="protein sequence ID" value="AAA31211.1"/>
    <property type="molecule type" value="mRNA"/>
</dbReference>
<dbReference type="PIR" id="A00181">
    <property type="entry name" value="O4RBP1"/>
</dbReference>
<dbReference type="SMR" id="P00180"/>
<dbReference type="FunCoup" id="P00180">
    <property type="interactions" value="247"/>
</dbReference>
<dbReference type="IntAct" id="P00180">
    <property type="interactions" value="2"/>
</dbReference>
<dbReference type="PaxDb" id="9986-ENSOCUP00000019969"/>
<dbReference type="eggNOG" id="KOG0156">
    <property type="taxonomic scope" value="Eukaryota"/>
</dbReference>
<dbReference type="InParanoid" id="P00180"/>
<dbReference type="Proteomes" id="UP000001811">
    <property type="component" value="Unplaced"/>
</dbReference>
<dbReference type="GO" id="GO:0005789">
    <property type="term" value="C:endoplasmic reticulum membrane"/>
    <property type="evidence" value="ECO:0007669"/>
    <property type="project" value="UniProtKB-SubCell"/>
</dbReference>
<dbReference type="GO" id="GO:0020037">
    <property type="term" value="F:heme binding"/>
    <property type="evidence" value="ECO:0007669"/>
    <property type="project" value="InterPro"/>
</dbReference>
<dbReference type="GO" id="GO:0005506">
    <property type="term" value="F:iron ion binding"/>
    <property type="evidence" value="ECO:0007669"/>
    <property type="project" value="InterPro"/>
</dbReference>
<dbReference type="GO" id="GO:0016712">
    <property type="term" value="F:oxidoreductase activity, acting on paired donors, with incorporation or reduction of molecular oxygen, reduced flavin or flavoprotein as one donor, and incorporation of one atom of oxygen"/>
    <property type="evidence" value="ECO:0007669"/>
    <property type="project" value="UniProtKB-EC"/>
</dbReference>
<dbReference type="GO" id="GO:0006082">
    <property type="term" value="P:organic acid metabolic process"/>
    <property type="evidence" value="ECO:0007669"/>
    <property type="project" value="TreeGrafter"/>
</dbReference>
<dbReference type="GO" id="GO:0006805">
    <property type="term" value="P:xenobiotic metabolic process"/>
    <property type="evidence" value="ECO:0007669"/>
    <property type="project" value="TreeGrafter"/>
</dbReference>
<dbReference type="CDD" id="cd20665">
    <property type="entry name" value="CYP2C-like"/>
    <property type="match status" value="1"/>
</dbReference>
<dbReference type="FunFam" id="1.10.630.10:FF:000299">
    <property type="entry name" value="Cytochrome P450 2C9"/>
    <property type="match status" value="1"/>
</dbReference>
<dbReference type="Gene3D" id="1.10.630.10">
    <property type="entry name" value="Cytochrome P450"/>
    <property type="match status" value="1"/>
</dbReference>
<dbReference type="InterPro" id="IPR001128">
    <property type="entry name" value="Cyt_P450"/>
</dbReference>
<dbReference type="InterPro" id="IPR017972">
    <property type="entry name" value="Cyt_P450_CS"/>
</dbReference>
<dbReference type="InterPro" id="IPR002401">
    <property type="entry name" value="Cyt_P450_E_grp-I"/>
</dbReference>
<dbReference type="InterPro" id="IPR036396">
    <property type="entry name" value="Cyt_P450_sf"/>
</dbReference>
<dbReference type="InterPro" id="IPR050182">
    <property type="entry name" value="Cytochrome_P450_fam2"/>
</dbReference>
<dbReference type="PANTHER" id="PTHR24300:SF423">
    <property type="entry name" value="CYTOCHROME P450 2C18"/>
    <property type="match status" value="1"/>
</dbReference>
<dbReference type="PANTHER" id="PTHR24300">
    <property type="entry name" value="CYTOCHROME P450 508A4-RELATED"/>
    <property type="match status" value="1"/>
</dbReference>
<dbReference type="Pfam" id="PF00067">
    <property type="entry name" value="p450"/>
    <property type="match status" value="1"/>
</dbReference>
<dbReference type="PRINTS" id="PR00463">
    <property type="entry name" value="EP450I"/>
</dbReference>
<dbReference type="PRINTS" id="PR00385">
    <property type="entry name" value="P450"/>
</dbReference>
<dbReference type="SUPFAM" id="SSF48264">
    <property type="entry name" value="Cytochrome P450"/>
    <property type="match status" value="1"/>
</dbReference>
<dbReference type="PROSITE" id="PS00086">
    <property type="entry name" value="CYTOCHROME_P450"/>
    <property type="match status" value="1"/>
</dbReference>
<evidence type="ECO:0000250" key="1"/>
<evidence type="ECO:0000305" key="2"/>
<feature type="chain" id="PRO_0000051692" description="Cytochrome P450 2C1">
    <location>
        <begin position="1"/>
        <end position="490"/>
    </location>
</feature>
<feature type="binding site" description="axial binding residue" evidence="1">
    <location>
        <position position="435"/>
    </location>
    <ligand>
        <name>heme</name>
        <dbReference type="ChEBI" id="CHEBI:30413"/>
    </ligand>
    <ligandPart>
        <name>Fe</name>
        <dbReference type="ChEBI" id="CHEBI:18248"/>
    </ligandPart>
</feature>
<keyword id="KW-0256">Endoplasmic reticulum</keyword>
<keyword id="KW-0349">Heme</keyword>
<keyword id="KW-0408">Iron</keyword>
<keyword id="KW-0472">Membrane</keyword>
<keyword id="KW-0479">Metal-binding</keyword>
<keyword id="KW-0492">Microsome</keyword>
<keyword id="KW-0503">Monooxygenase</keyword>
<keyword id="KW-0560">Oxidoreductase</keyword>
<keyword id="KW-1185">Reference proteome</keyword>
<name>CP2C1_RABIT</name>
<reference key="1">
    <citation type="journal article" date="1990" name="DNA Cell Biol.">
        <title>Structure of 5' regions and expression of phenobarbital-inducible rabbit cytochrome P450IIC genes.</title>
        <authorList>
            <person name="Zhao J."/>
            <person name="Chan G."/>
            <person name="Govind S."/>
            <person name="Bell P."/>
            <person name="Kemper B.W."/>
        </authorList>
    </citation>
    <scope>NUCLEOTIDE SEQUENCE [GENOMIC DNA]</scope>
    <source>
        <strain>New Zealand white</strain>
        <tissue>Liver</tissue>
    </source>
</reference>
<reference key="2">
    <citation type="journal article" date="1984" name="Biochemistry">
        <title>Isolation and sequence analysis of three cloned cDNAs for rabbit liver proteins that are related to rabbit cytochrome P-450 (form 2), the major phenobarbital-inducible form.</title>
        <authorList>
            <person name="Leighton J.K."/>
            <person name="Debrunner-Vossbrinck B.A."/>
            <person name="Kemper B."/>
        </authorList>
    </citation>
    <scope>NUCLEOTIDE SEQUENCE [MRNA] OF 11-490</scope>
</reference>
<comment type="function">
    <text>Cytochromes P450 are a group of heme-thiolate monooxygenases. In liver microsomes, this enzyme is involved in an NADPH-dependent electron transport pathway. It oxidizes a variety of structurally unrelated compounds, including steroids, fatty acids, and xenobiotics.</text>
</comment>
<comment type="catalytic activity">
    <reaction>
        <text>an organic molecule + reduced [NADPH--hemoprotein reductase] + O2 = an alcohol + oxidized [NADPH--hemoprotein reductase] + H2O + H(+)</text>
        <dbReference type="Rhea" id="RHEA:17149"/>
        <dbReference type="Rhea" id="RHEA-COMP:11964"/>
        <dbReference type="Rhea" id="RHEA-COMP:11965"/>
        <dbReference type="ChEBI" id="CHEBI:15377"/>
        <dbReference type="ChEBI" id="CHEBI:15378"/>
        <dbReference type="ChEBI" id="CHEBI:15379"/>
        <dbReference type="ChEBI" id="CHEBI:30879"/>
        <dbReference type="ChEBI" id="CHEBI:57618"/>
        <dbReference type="ChEBI" id="CHEBI:58210"/>
        <dbReference type="ChEBI" id="CHEBI:142491"/>
        <dbReference type="EC" id="1.14.14.1"/>
    </reaction>
</comment>
<comment type="cofactor">
    <cofactor evidence="1">
        <name>heme</name>
        <dbReference type="ChEBI" id="CHEBI:30413"/>
    </cofactor>
</comment>
<comment type="interaction">
    <interactant intactId="EBI-6251821">
        <id>P00180</id>
    </interactant>
    <interactant intactId="EBI-6252425">
        <id>O15503</id>
        <label>INSIG1</label>
    </interactant>
    <organismsDiffer>true</organismsDiffer>
    <experiments>2</experiments>
</comment>
<comment type="subcellular location">
    <subcellularLocation>
        <location>Endoplasmic reticulum membrane</location>
        <topology>Peripheral membrane protein</topology>
    </subcellularLocation>
    <subcellularLocation>
        <location>Microsome membrane</location>
        <topology>Peripheral membrane protein</topology>
    </subcellularLocation>
</comment>
<comment type="induction">
    <text>By phenobarbital.</text>
</comment>
<comment type="similarity">
    <text evidence="2">Belongs to the cytochrome P450 family.</text>
</comment>
<gene>
    <name type="primary">CYP2C1</name>
</gene>
<accession>P00180</accession>
<accession>Q00172</accession>